<feature type="chain" id="PRO_0000342155" description="Probable serine incorporator">
    <location>
        <begin position="1"/>
        <end position="417"/>
    </location>
</feature>
<feature type="transmembrane region" description="Helical" evidence="2">
    <location>
        <begin position="25"/>
        <end position="45"/>
    </location>
</feature>
<feature type="transmembrane region" description="Helical" evidence="2">
    <location>
        <begin position="69"/>
        <end position="89"/>
    </location>
</feature>
<feature type="transmembrane region" description="Helical" evidence="2">
    <location>
        <begin position="104"/>
        <end position="124"/>
    </location>
</feature>
<feature type="transmembrane region" description="Helical" evidence="2">
    <location>
        <begin position="131"/>
        <end position="151"/>
    </location>
</feature>
<feature type="transmembrane region" description="Helical" evidence="2">
    <location>
        <begin position="180"/>
        <end position="200"/>
    </location>
</feature>
<feature type="transmembrane region" description="Helical" evidence="2">
    <location>
        <begin position="208"/>
        <end position="228"/>
    </location>
</feature>
<feature type="transmembrane region" description="Helical" evidence="2">
    <location>
        <begin position="239"/>
        <end position="259"/>
    </location>
</feature>
<feature type="transmembrane region" description="Helical" evidence="2">
    <location>
        <begin position="276"/>
        <end position="296"/>
    </location>
</feature>
<feature type="transmembrane region" description="Helical" evidence="2">
    <location>
        <begin position="339"/>
        <end position="359"/>
    </location>
</feature>
<feature type="transmembrane region" description="Helical" evidence="2">
    <location>
        <begin position="391"/>
        <end position="411"/>
    </location>
</feature>
<organism>
    <name type="scientific">Dictyostelium discoideum</name>
    <name type="common">Social amoeba</name>
    <dbReference type="NCBI Taxonomy" id="44689"/>
    <lineage>
        <taxon>Eukaryota</taxon>
        <taxon>Amoebozoa</taxon>
        <taxon>Evosea</taxon>
        <taxon>Eumycetozoa</taxon>
        <taxon>Dictyostelia</taxon>
        <taxon>Dictyosteliales</taxon>
        <taxon>Dictyosteliaceae</taxon>
        <taxon>Dictyostelium</taxon>
    </lineage>
</organism>
<reference key="1">
    <citation type="journal article" date="2005" name="Nature">
        <title>The genome of the social amoeba Dictyostelium discoideum.</title>
        <authorList>
            <person name="Eichinger L."/>
            <person name="Pachebat J.A."/>
            <person name="Gloeckner G."/>
            <person name="Rajandream M.A."/>
            <person name="Sucgang R."/>
            <person name="Berriman M."/>
            <person name="Song J."/>
            <person name="Olsen R."/>
            <person name="Szafranski K."/>
            <person name="Xu Q."/>
            <person name="Tunggal B."/>
            <person name="Kummerfeld S."/>
            <person name="Madera M."/>
            <person name="Konfortov B.A."/>
            <person name="Rivero F."/>
            <person name="Bankier A.T."/>
            <person name="Lehmann R."/>
            <person name="Hamlin N."/>
            <person name="Davies R."/>
            <person name="Gaudet P."/>
            <person name="Fey P."/>
            <person name="Pilcher K."/>
            <person name="Chen G."/>
            <person name="Saunders D."/>
            <person name="Sodergren E.J."/>
            <person name="Davis P."/>
            <person name="Kerhornou A."/>
            <person name="Nie X."/>
            <person name="Hall N."/>
            <person name="Anjard C."/>
            <person name="Hemphill L."/>
            <person name="Bason N."/>
            <person name="Farbrother P."/>
            <person name="Desany B."/>
            <person name="Just E."/>
            <person name="Morio T."/>
            <person name="Rost R."/>
            <person name="Churcher C.M."/>
            <person name="Cooper J."/>
            <person name="Haydock S."/>
            <person name="van Driessche N."/>
            <person name="Cronin A."/>
            <person name="Goodhead I."/>
            <person name="Muzny D.M."/>
            <person name="Mourier T."/>
            <person name="Pain A."/>
            <person name="Lu M."/>
            <person name="Harper D."/>
            <person name="Lindsay R."/>
            <person name="Hauser H."/>
            <person name="James K.D."/>
            <person name="Quiles M."/>
            <person name="Madan Babu M."/>
            <person name="Saito T."/>
            <person name="Buchrieser C."/>
            <person name="Wardroper A."/>
            <person name="Felder M."/>
            <person name="Thangavelu M."/>
            <person name="Johnson D."/>
            <person name="Knights A."/>
            <person name="Loulseged H."/>
            <person name="Mungall K.L."/>
            <person name="Oliver K."/>
            <person name="Price C."/>
            <person name="Quail M.A."/>
            <person name="Urushihara H."/>
            <person name="Hernandez J."/>
            <person name="Rabbinowitsch E."/>
            <person name="Steffen D."/>
            <person name="Sanders M."/>
            <person name="Ma J."/>
            <person name="Kohara Y."/>
            <person name="Sharp S."/>
            <person name="Simmonds M.N."/>
            <person name="Spiegler S."/>
            <person name="Tivey A."/>
            <person name="Sugano S."/>
            <person name="White B."/>
            <person name="Walker D."/>
            <person name="Woodward J.R."/>
            <person name="Winckler T."/>
            <person name="Tanaka Y."/>
            <person name="Shaulsky G."/>
            <person name="Schleicher M."/>
            <person name="Weinstock G.M."/>
            <person name="Rosenthal A."/>
            <person name="Cox E.C."/>
            <person name="Chisholm R.L."/>
            <person name="Gibbs R.A."/>
            <person name="Loomis W.F."/>
            <person name="Platzer M."/>
            <person name="Kay R.R."/>
            <person name="Williams J.G."/>
            <person name="Dear P.H."/>
            <person name="Noegel A.A."/>
            <person name="Barrell B.G."/>
            <person name="Kuspa A."/>
        </authorList>
    </citation>
    <scope>NUCLEOTIDE SEQUENCE [LARGE SCALE GENOMIC DNA]</scope>
    <source>
        <strain>AX4</strain>
    </source>
</reference>
<dbReference type="EMBL" id="AAFI02000040">
    <property type="protein sequence ID" value="EAL66846.1"/>
    <property type="molecule type" value="Genomic_DNA"/>
</dbReference>
<dbReference type="RefSeq" id="XP_640818.1">
    <property type="nucleotide sequence ID" value="XM_635726.1"/>
</dbReference>
<dbReference type="SMR" id="Q54UF8"/>
<dbReference type="FunCoup" id="Q54UF8">
    <property type="interactions" value="423"/>
</dbReference>
<dbReference type="STRING" id="44689.Q54UF8"/>
<dbReference type="PaxDb" id="44689-DDB0238344"/>
<dbReference type="EnsemblProtists" id="EAL66846">
    <property type="protein sequence ID" value="EAL66846"/>
    <property type="gene ID" value="DDB_G0281099"/>
</dbReference>
<dbReference type="GeneID" id="8622872"/>
<dbReference type="KEGG" id="ddi:DDB_G0281099"/>
<dbReference type="dictyBase" id="DDB_G0281099"/>
<dbReference type="VEuPathDB" id="AmoebaDB:DDB_G0281099"/>
<dbReference type="eggNOG" id="KOG2592">
    <property type="taxonomic scope" value="Eukaryota"/>
</dbReference>
<dbReference type="HOGENOM" id="CLU_029574_5_0_1"/>
<dbReference type="InParanoid" id="Q54UF8"/>
<dbReference type="OMA" id="DKHCNPL"/>
<dbReference type="PhylomeDB" id="Q54UF8"/>
<dbReference type="Reactome" id="R-DDI-977347">
    <property type="pathway name" value="Serine biosynthesis"/>
</dbReference>
<dbReference type="PRO" id="PR:Q54UF8"/>
<dbReference type="Proteomes" id="UP000002195">
    <property type="component" value="Chromosome 3"/>
</dbReference>
<dbReference type="GO" id="GO:0005789">
    <property type="term" value="C:endoplasmic reticulum membrane"/>
    <property type="evidence" value="ECO:0007669"/>
    <property type="project" value="UniProtKB-SubCell"/>
</dbReference>
<dbReference type="GO" id="GO:0016020">
    <property type="term" value="C:membrane"/>
    <property type="evidence" value="ECO:0000318"/>
    <property type="project" value="GO_Central"/>
</dbReference>
<dbReference type="GO" id="GO:0008654">
    <property type="term" value="P:phospholipid biosynthetic process"/>
    <property type="evidence" value="ECO:0007669"/>
    <property type="project" value="UniProtKB-KW"/>
</dbReference>
<dbReference type="InterPro" id="IPR005016">
    <property type="entry name" value="TDE1/TMS"/>
</dbReference>
<dbReference type="PANTHER" id="PTHR10383">
    <property type="entry name" value="SERINE INCORPORATOR"/>
    <property type="match status" value="1"/>
</dbReference>
<dbReference type="PANTHER" id="PTHR10383:SF9">
    <property type="entry name" value="SERINE INCORPORATOR, ISOFORM F"/>
    <property type="match status" value="1"/>
</dbReference>
<dbReference type="Pfam" id="PF03348">
    <property type="entry name" value="Serinc"/>
    <property type="match status" value="1"/>
</dbReference>
<proteinExistence type="inferred from homology"/>
<sequence>MQSFMTGAPGHHIQSIKKSTSTRLVYVVFFLLVSIVAYILSYWTFSWFNNLDVLKICSKGDNECKGALVVYRLTFGLALYHILLGLVMINVKSAGDSRAKLQDGYWPLKILLLGVLIFVSFFIPNSFFRVYTWISIFSAAIFIFIQLVLLIECAYSLNESCVRKIEDEGHSGKKWYVLLCVLSFGSIALAVAGTVLMLVFYGRGSCSINQFYIVFNLGICLIVGVLSISEKVREYRPSSGLFQSGVVMLYCTYLIYSAINSEPPGTCSSNNTSSPKESTIIIGAVFTIISVCYSAFRSSDSTELLGNHNHYSSIPTDPNAETTGVADDECECTAYNYSFFHFTFACGAMYLSALLTNWATMTSTDITSSSTSSSNSTISVDSGMVSVWVKVVSSWVVVLLYLWTLIGPILLRNRVWD</sequence>
<comment type="function">
    <text evidence="1">Enhances the incorporation of serine into phosphatidylserine and sphingolipids.</text>
</comment>
<comment type="subcellular location">
    <subcellularLocation>
        <location evidence="1">Endoplasmic reticulum membrane</location>
        <topology evidence="1">Multi-pass membrane protein</topology>
    </subcellularLocation>
</comment>
<comment type="similarity">
    <text evidence="3">Belongs to the TDE1 family.</text>
</comment>
<keyword id="KW-0256">Endoplasmic reticulum</keyword>
<keyword id="KW-0444">Lipid biosynthesis</keyword>
<keyword id="KW-0443">Lipid metabolism</keyword>
<keyword id="KW-0472">Membrane</keyword>
<keyword id="KW-0594">Phospholipid biosynthesis</keyword>
<keyword id="KW-1208">Phospholipid metabolism</keyword>
<keyword id="KW-1185">Reference proteome</keyword>
<keyword id="KW-0812">Transmembrane</keyword>
<keyword id="KW-1133">Transmembrane helix</keyword>
<protein>
    <recommendedName>
        <fullName>Probable serine incorporator</fullName>
    </recommendedName>
</protein>
<gene>
    <name type="primary">serinc</name>
    <name type="ORF">DDB_G0281099</name>
</gene>
<accession>Q54UF8</accession>
<name>SERIC_DICDI</name>
<evidence type="ECO:0000250" key="1"/>
<evidence type="ECO:0000255" key="2"/>
<evidence type="ECO:0000305" key="3"/>